<reference key="1">
    <citation type="journal article" date="2006" name="Virology">
        <title>Polydnavirus genomes reflect their dual roles as mutualists and pathogens.</title>
        <authorList>
            <person name="Webb B.A."/>
            <person name="Strand M.R."/>
            <person name="Dickey S.E."/>
            <person name="Beck M.H."/>
            <person name="Hilgarth R.S."/>
            <person name="Barney W.E."/>
            <person name="Kadash K."/>
            <person name="Kroemer J.A."/>
            <person name="Lindstrom K.G."/>
            <person name="Rattanadechakul W."/>
            <person name="Shelby K.S."/>
            <person name="Thoetkiattikul H."/>
            <person name="Turnbull M.W."/>
            <person name="Witherell R.A."/>
        </authorList>
    </citation>
    <scope>NUCLEOTIDE SEQUENCE [GENOMIC DNA]</scope>
</reference>
<sequence length="111" mass="13429">MSQSSSDNKCFMVVKFLELPFMDEKNLYYCVHSSWIVHRTQEYVMVAFPLQNELSPSLFDMKYRQVRIGIMEYKTGKCPYEKILYPKIILNNITHFILQYNYLYKKSYILK</sequence>
<proteinExistence type="predicted"/>
<feature type="chain" id="PRO_0000405402" description="Uncharacterized protein M4">
    <location>
        <begin position="1"/>
        <end position="111"/>
    </location>
</feature>
<gene>
    <name type="primary">M4</name>
</gene>
<dbReference type="EMBL" id="AY875688">
    <property type="protein sequence ID" value="AAW51797.1"/>
    <property type="molecule type" value="Genomic_DNA"/>
</dbReference>
<dbReference type="RefSeq" id="YP_239396.1">
    <property type="nucleotide sequence ID" value="NC_007038.1"/>
</dbReference>
<dbReference type="KEGG" id="vg:5075829"/>
<dbReference type="Proteomes" id="UP000008168">
    <property type="component" value="Genome"/>
</dbReference>
<accession>Q5I132</accession>
<protein>
    <recommendedName>
        <fullName>Uncharacterized protein M4</fullName>
    </recommendedName>
</protein>
<name>YM4_MDBVW</name>
<organism>
    <name type="scientific">Microplitis demolitor bracovirus (isolate Webb)</name>
    <name type="common">MdBV</name>
    <dbReference type="NCBI Taxonomy" id="654919"/>
    <lineage>
        <taxon>Viruses</taxon>
        <taxon>Viruses incertae sedis</taxon>
        <taxon>Polydnaviriformidae</taxon>
        <taxon>Bracoviriform</taxon>
        <taxon>Microplitis demolitor bracovirus</taxon>
    </lineage>
</organism>
<keyword id="KW-1185">Reference proteome</keyword>
<organismHost>
    <name type="scientific">Microplitis demolitor</name>
    <name type="common">Parasitoid wasp</name>
    <dbReference type="NCBI Taxonomy" id="69319"/>
</organismHost>